<reference key="1">
    <citation type="submission" date="2006-10" db="EMBL/GenBank/DDBJ databases">
        <title>Complete sequence of Syntrophobacter fumaroxidans MPOB.</title>
        <authorList>
            <consortium name="US DOE Joint Genome Institute"/>
            <person name="Copeland A."/>
            <person name="Lucas S."/>
            <person name="Lapidus A."/>
            <person name="Barry K."/>
            <person name="Detter J.C."/>
            <person name="Glavina del Rio T."/>
            <person name="Hammon N."/>
            <person name="Israni S."/>
            <person name="Pitluck S."/>
            <person name="Goltsman E.G."/>
            <person name="Martinez M."/>
            <person name="Schmutz J."/>
            <person name="Larimer F."/>
            <person name="Land M."/>
            <person name="Hauser L."/>
            <person name="Kyrpides N."/>
            <person name="Kim E."/>
            <person name="Boone D.R."/>
            <person name="Brockman F."/>
            <person name="Culley D."/>
            <person name="Ferry J."/>
            <person name="Gunsalus R."/>
            <person name="McInerney M.J."/>
            <person name="Morrison M."/>
            <person name="Plugge C."/>
            <person name="Rohlin L."/>
            <person name="Scholten J."/>
            <person name="Sieber J."/>
            <person name="Stams A.J.M."/>
            <person name="Worm P."/>
            <person name="Henstra A.M."/>
            <person name="Richardson P."/>
        </authorList>
    </citation>
    <scope>NUCLEOTIDE SEQUENCE [LARGE SCALE GENOMIC DNA]</scope>
    <source>
        <strain>DSM 10017 / MPOB</strain>
    </source>
</reference>
<feature type="chain" id="PRO_0000390261" description="NADH-quinone oxidoreductase subunit K 1">
    <location>
        <begin position="1"/>
        <end position="102"/>
    </location>
</feature>
<feature type="transmembrane region" description="Helical" evidence="1">
    <location>
        <begin position="3"/>
        <end position="23"/>
    </location>
</feature>
<feature type="transmembrane region" description="Helical" evidence="1">
    <location>
        <begin position="29"/>
        <end position="49"/>
    </location>
</feature>
<feature type="transmembrane region" description="Helical" evidence="1">
    <location>
        <begin position="62"/>
        <end position="82"/>
    </location>
</feature>
<accession>A0LEQ5</accession>
<keyword id="KW-0997">Cell inner membrane</keyword>
<keyword id="KW-1003">Cell membrane</keyword>
<keyword id="KW-0472">Membrane</keyword>
<keyword id="KW-0520">NAD</keyword>
<keyword id="KW-0874">Quinone</keyword>
<keyword id="KW-1185">Reference proteome</keyword>
<keyword id="KW-1278">Translocase</keyword>
<keyword id="KW-0812">Transmembrane</keyword>
<keyword id="KW-1133">Transmembrane helix</keyword>
<keyword id="KW-0813">Transport</keyword>
<keyword id="KW-0830">Ubiquinone</keyword>
<evidence type="ECO:0000255" key="1">
    <source>
        <dbReference type="HAMAP-Rule" id="MF_01456"/>
    </source>
</evidence>
<protein>
    <recommendedName>
        <fullName evidence="1">NADH-quinone oxidoreductase subunit K 1</fullName>
        <ecNumber evidence="1">7.1.1.-</ecNumber>
    </recommendedName>
    <alternativeName>
        <fullName evidence="1">NADH dehydrogenase I subunit K 1</fullName>
    </alternativeName>
    <alternativeName>
        <fullName evidence="1">NDH-1 subunit K 1</fullName>
    </alternativeName>
</protein>
<gene>
    <name evidence="1" type="primary">nuoK1</name>
    <name type="ordered locus">Sfum_0206</name>
</gene>
<name>NUOK1_SYNFM</name>
<comment type="function">
    <text evidence="1">NDH-1 shuttles electrons from NADH, via FMN and iron-sulfur (Fe-S) centers, to quinones in the respiratory chain. The immediate electron acceptor for the enzyme in this species is believed to be ubiquinone. Couples the redox reaction to proton translocation (for every two electrons transferred, four hydrogen ions are translocated across the cytoplasmic membrane), and thus conserves the redox energy in a proton gradient.</text>
</comment>
<comment type="catalytic activity">
    <reaction evidence="1">
        <text>a quinone + NADH + 5 H(+)(in) = a quinol + NAD(+) + 4 H(+)(out)</text>
        <dbReference type="Rhea" id="RHEA:57888"/>
        <dbReference type="ChEBI" id="CHEBI:15378"/>
        <dbReference type="ChEBI" id="CHEBI:24646"/>
        <dbReference type="ChEBI" id="CHEBI:57540"/>
        <dbReference type="ChEBI" id="CHEBI:57945"/>
        <dbReference type="ChEBI" id="CHEBI:132124"/>
    </reaction>
</comment>
<comment type="subunit">
    <text evidence="1">NDH-1 is composed of 14 different subunits. Subunits NuoA, H, J, K, L, M, N constitute the membrane sector of the complex.</text>
</comment>
<comment type="subcellular location">
    <subcellularLocation>
        <location evidence="1">Cell inner membrane</location>
        <topology evidence="1">Multi-pass membrane protein</topology>
    </subcellularLocation>
</comment>
<comment type="similarity">
    <text evidence="1">Belongs to the complex I subunit 4L family.</text>
</comment>
<dbReference type="EC" id="7.1.1.-" evidence="1"/>
<dbReference type="EMBL" id="CP000478">
    <property type="protein sequence ID" value="ABK15907.1"/>
    <property type="molecule type" value="Genomic_DNA"/>
</dbReference>
<dbReference type="RefSeq" id="WP_011697080.1">
    <property type="nucleotide sequence ID" value="NC_008554.1"/>
</dbReference>
<dbReference type="SMR" id="A0LEQ5"/>
<dbReference type="FunCoup" id="A0LEQ5">
    <property type="interactions" value="247"/>
</dbReference>
<dbReference type="STRING" id="335543.Sfum_0206"/>
<dbReference type="KEGG" id="sfu:Sfum_0206"/>
<dbReference type="eggNOG" id="COG0713">
    <property type="taxonomic scope" value="Bacteria"/>
</dbReference>
<dbReference type="HOGENOM" id="CLU_144724_0_0_7"/>
<dbReference type="InParanoid" id="A0LEQ5"/>
<dbReference type="OrthoDB" id="9810120at2"/>
<dbReference type="Proteomes" id="UP000001784">
    <property type="component" value="Chromosome"/>
</dbReference>
<dbReference type="GO" id="GO:0030964">
    <property type="term" value="C:NADH dehydrogenase complex"/>
    <property type="evidence" value="ECO:0007669"/>
    <property type="project" value="TreeGrafter"/>
</dbReference>
<dbReference type="GO" id="GO:0005886">
    <property type="term" value="C:plasma membrane"/>
    <property type="evidence" value="ECO:0007669"/>
    <property type="project" value="UniProtKB-SubCell"/>
</dbReference>
<dbReference type="GO" id="GO:0050136">
    <property type="term" value="F:NADH:ubiquinone reductase (non-electrogenic) activity"/>
    <property type="evidence" value="ECO:0007669"/>
    <property type="project" value="UniProtKB-UniRule"/>
</dbReference>
<dbReference type="GO" id="GO:0048038">
    <property type="term" value="F:quinone binding"/>
    <property type="evidence" value="ECO:0007669"/>
    <property type="project" value="UniProtKB-KW"/>
</dbReference>
<dbReference type="GO" id="GO:0042773">
    <property type="term" value="P:ATP synthesis coupled electron transport"/>
    <property type="evidence" value="ECO:0007669"/>
    <property type="project" value="InterPro"/>
</dbReference>
<dbReference type="FunFam" id="1.10.287.3510:FF:000001">
    <property type="entry name" value="NADH-quinone oxidoreductase subunit K"/>
    <property type="match status" value="1"/>
</dbReference>
<dbReference type="Gene3D" id="1.10.287.3510">
    <property type="match status" value="1"/>
</dbReference>
<dbReference type="HAMAP" id="MF_01456">
    <property type="entry name" value="NDH1_NuoK"/>
    <property type="match status" value="1"/>
</dbReference>
<dbReference type="InterPro" id="IPR001133">
    <property type="entry name" value="NADH_UbQ_OxRdtase_chain4L/K"/>
</dbReference>
<dbReference type="InterPro" id="IPR039428">
    <property type="entry name" value="NUOK/Mnh_C1-like"/>
</dbReference>
<dbReference type="NCBIfam" id="NF004320">
    <property type="entry name" value="PRK05715.1-2"/>
    <property type="match status" value="1"/>
</dbReference>
<dbReference type="NCBIfam" id="NF004321">
    <property type="entry name" value="PRK05715.1-3"/>
    <property type="match status" value="1"/>
</dbReference>
<dbReference type="PANTHER" id="PTHR11434:SF16">
    <property type="entry name" value="NADH-UBIQUINONE OXIDOREDUCTASE CHAIN 4L"/>
    <property type="match status" value="1"/>
</dbReference>
<dbReference type="PANTHER" id="PTHR11434">
    <property type="entry name" value="NADH-UBIQUINONE OXIDOREDUCTASE SUBUNIT ND4L"/>
    <property type="match status" value="1"/>
</dbReference>
<dbReference type="Pfam" id="PF00420">
    <property type="entry name" value="Oxidored_q2"/>
    <property type="match status" value="1"/>
</dbReference>
<proteinExistence type="inferred from homology"/>
<organism>
    <name type="scientific">Syntrophobacter fumaroxidans (strain DSM 10017 / MPOB)</name>
    <dbReference type="NCBI Taxonomy" id="335543"/>
    <lineage>
        <taxon>Bacteria</taxon>
        <taxon>Pseudomonadati</taxon>
        <taxon>Thermodesulfobacteriota</taxon>
        <taxon>Syntrophobacteria</taxon>
        <taxon>Syntrophobacterales</taxon>
        <taxon>Syntrophobacteraceae</taxon>
        <taxon>Syntrophobacter</taxon>
    </lineage>
</organism>
<sequence length="102" mass="11100">MNTLTTYLVIAAVLFCLGLLGILQRRNLVGMLISLELMLNGANLNFMAFNRFLAPEPAVGQIIALIVMGLAAAEAAIGLSIIFALFRRMHSINVERAQELRG</sequence>